<organism>
    <name type="scientific">Arabidopsis thaliana</name>
    <name type="common">Mouse-ear cress</name>
    <dbReference type="NCBI Taxonomy" id="3702"/>
    <lineage>
        <taxon>Eukaryota</taxon>
        <taxon>Viridiplantae</taxon>
        <taxon>Streptophyta</taxon>
        <taxon>Embryophyta</taxon>
        <taxon>Tracheophyta</taxon>
        <taxon>Spermatophyta</taxon>
        <taxon>Magnoliopsida</taxon>
        <taxon>eudicotyledons</taxon>
        <taxon>Gunneridae</taxon>
        <taxon>Pentapetalae</taxon>
        <taxon>rosids</taxon>
        <taxon>malvids</taxon>
        <taxon>Brassicales</taxon>
        <taxon>Brassicaceae</taxon>
        <taxon>Camelineae</taxon>
        <taxon>Arabidopsis</taxon>
    </lineage>
</organism>
<keyword id="KW-0328">Glycosyltransferase</keyword>
<keyword id="KW-1185">Reference proteome</keyword>
<keyword id="KW-0808">Transferase</keyword>
<reference key="1">
    <citation type="journal article" date="2000" name="Nature">
        <title>Sequence and analysis of chromosome 3 of the plant Arabidopsis thaliana.</title>
        <authorList>
            <person name="Salanoubat M."/>
            <person name="Lemcke K."/>
            <person name="Rieger M."/>
            <person name="Ansorge W."/>
            <person name="Unseld M."/>
            <person name="Fartmann B."/>
            <person name="Valle G."/>
            <person name="Bloecker H."/>
            <person name="Perez-Alonso M."/>
            <person name="Obermaier B."/>
            <person name="Delseny M."/>
            <person name="Boutry M."/>
            <person name="Grivell L.A."/>
            <person name="Mache R."/>
            <person name="Puigdomenech P."/>
            <person name="De Simone V."/>
            <person name="Choisne N."/>
            <person name="Artiguenave F."/>
            <person name="Robert C."/>
            <person name="Brottier P."/>
            <person name="Wincker P."/>
            <person name="Cattolico L."/>
            <person name="Weissenbach J."/>
            <person name="Saurin W."/>
            <person name="Quetier F."/>
            <person name="Schaefer M."/>
            <person name="Mueller-Auer S."/>
            <person name="Gabel C."/>
            <person name="Fuchs M."/>
            <person name="Benes V."/>
            <person name="Wurmbach E."/>
            <person name="Drzonek H."/>
            <person name="Erfle H."/>
            <person name="Jordan N."/>
            <person name="Bangert S."/>
            <person name="Wiedelmann R."/>
            <person name="Kranz H."/>
            <person name="Voss H."/>
            <person name="Holland R."/>
            <person name="Brandt P."/>
            <person name="Nyakatura G."/>
            <person name="Vezzi A."/>
            <person name="D'Angelo M."/>
            <person name="Pallavicini A."/>
            <person name="Toppo S."/>
            <person name="Simionati B."/>
            <person name="Conrad A."/>
            <person name="Hornischer K."/>
            <person name="Kauer G."/>
            <person name="Loehnert T.-H."/>
            <person name="Nordsiek G."/>
            <person name="Reichelt J."/>
            <person name="Scharfe M."/>
            <person name="Schoen O."/>
            <person name="Bargues M."/>
            <person name="Terol J."/>
            <person name="Climent J."/>
            <person name="Navarro P."/>
            <person name="Collado C."/>
            <person name="Perez-Perez A."/>
            <person name="Ottenwaelder B."/>
            <person name="Duchemin D."/>
            <person name="Cooke R."/>
            <person name="Laudie M."/>
            <person name="Berger-Llauro C."/>
            <person name="Purnelle B."/>
            <person name="Masuy D."/>
            <person name="de Haan M."/>
            <person name="Maarse A.C."/>
            <person name="Alcaraz J.-P."/>
            <person name="Cottet A."/>
            <person name="Casacuberta E."/>
            <person name="Monfort A."/>
            <person name="Argiriou A."/>
            <person name="Flores M."/>
            <person name="Liguori R."/>
            <person name="Vitale D."/>
            <person name="Mannhaupt G."/>
            <person name="Haase D."/>
            <person name="Schoof H."/>
            <person name="Rudd S."/>
            <person name="Zaccaria P."/>
            <person name="Mewes H.-W."/>
            <person name="Mayer K.F.X."/>
            <person name="Kaul S."/>
            <person name="Town C.D."/>
            <person name="Koo H.L."/>
            <person name="Tallon L.J."/>
            <person name="Jenkins J."/>
            <person name="Rooney T."/>
            <person name="Rizzo M."/>
            <person name="Walts A."/>
            <person name="Utterback T."/>
            <person name="Fujii C.Y."/>
            <person name="Shea T.P."/>
            <person name="Creasy T.H."/>
            <person name="Haas B."/>
            <person name="Maiti R."/>
            <person name="Wu D."/>
            <person name="Peterson J."/>
            <person name="Van Aken S."/>
            <person name="Pai G."/>
            <person name="Militscher J."/>
            <person name="Sellers P."/>
            <person name="Gill J.E."/>
            <person name="Feldblyum T.V."/>
            <person name="Preuss D."/>
            <person name="Lin X."/>
            <person name="Nierman W.C."/>
            <person name="Salzberg S.L."/>
            <person name="White O."/>
            <person name="Venter J.C."/>
            <person name="Fraser C.M."/>
            <person name="Kaneko T."/>
            <person name="Nakamura Y."/>
            <person name="Sato S."/>
            <person name="Kato T."/>
            <person name="Asamizu E."/>
            <person name="Sasamoto S."/>
            <person name="Kimura T."/>
            <person name="Idesawa K."/>
            <person name="Kawashima K."/>
            <person name="Kishida Y."/>
            <person name="Kiyokawa C."/>
            <person name="Kohara M."/>
            <person name="Matsumoto M."/>
            <person name="Matsuno A."/>
            <person name="Muraki A."/>
            <person name="Nakayama S."/>
            <person name="Nakazaki N."/>
            <person name="Shinpo S."/>
            <person name="Takeuchi C."/>
            <person name="Wada T."/>
            <person name="Watanabe A."/>
            <person name="Yamada M."/>
            <person name="Yasuda M."/>
            <person name="Tabata S."/>
        </authorList>
    </citation>
    <scope>NUCLEOTIDE SEQUENCE [LARGE SCALE GENOMIC DNA]</scope>
    <source>
        <strain>cv. Columbia</strain>
    </source>
</reference>
<reference key="2">
    <citation type="journal article" date="2017" name="Plant J.">
        <title>Araport11: a complete reannotation of the Arabidopsis thaliana reference genome.</title>
        <authorList>
            <person name="Cheng C.Y."/>
            <person name="Krishnakumar V."/>
            <person name="Chan A.P."/>
            <person name="Thibaud-Nissen F."/>
            <person name="Schobel S."/>
            <person name="Town C.D."/>
        </authorList>
    </citation>
    <scope>GENOME REANNOTATION</scope>
    <source>
        <strain>cv. Columbia</strain>
    </source>
</reference>
<reference key="3">
    <citation type="journal article" date="2006" name="Plant Biotechnol. J.">
        <title>Simultaneous high-throughput recombinational cloning of open reading frames in closed and open configurations.</title>
        <authorList>
            <person name="Underwood B.A."/>
            <person name="Vanderhaeghen R."/>
            <person name="Whitford R."/>
            <person name="Town C.D."/>
            <person name="Hilson P."/>
        </authorList>
    </citation>
    <scope>NUCLEOTIDE SEQUENCE [LARGE SCALE MRNA]</scope>
    <source>
        <strain>cv. Columbia</strain>
    </source>
</reference>
<reference key="4">
    <citation type="journal article" date="2001" name="J. Biol. Chem.">
        <title>Phylogenetic analysis of the UDP-glycosyltransferase multigene family of Arabidopsis thaliana.</title>
        <authorList>
            <person name="Li Y."/>
            <person name="Baldauf S."/>
            <person name="Lim E.K."/>
            <person name="Bowles D.J."/>
        </authorList>
    </citation>
    <scope>GENE FAMILY</scope>
</reference>
<accession>Q9SNB0</accession>
<accession>Q9STE2</accession>
<sequence length="449" mass="50336">MEKMEEKKRIVLVPVPAQRHVTPMMQLGTALNMKGFSITVVEGQFNKVSSSQNFPGFQFVTIPDTESLPESVLERLGPVEFLFEINKTSEASFKDCIRQSLLQQGNDIACIIYDEYMYFCGAAAKEFNLPSVIFSTQSATNQVSRCVLRKLSAEKFLVDMEDPEVQETLVENLHPLRYKDLPTSGVGPLDRLFELCREIVNKRTASAVIINTVRCLESSSLKRLQHELGIPVYALGPLHITVSAASSLLEEDRSCVEWLNKQKPRSVVYISLGSVVQMETKEVLEMARGLFNSNQPFLWVIRPGSIAGSEWIESLPEEVIKMVSERGYIVKWAPQIEVLGHPAVGGFWSHCGWNSTLESIVEGVPMICRPFHGEQKLNALCLESIWRIGFQVQGKVERGGVERAVKRLIVDEEGADMRERALVLKENLKASVRNGGSSYNALEEIVNLM</sequence>
<evidence type="ECO:0000250" key="1"/>
<evidence type="ECO:0000305" key="2"/>
<comment type="similarity">
    <text evidence="2">Belongs to the UDP-glycosyltransferase family.</text>
</comment>
<gene>
    <name type="primary">UGT76E6</name>
    <name type="ordered locus">At3g46680</name>
    <name type="ORF">F12A12.200</name>
</gene>
<proteinExistence type="evidence at transcript level"/>
<feature type="chain" id="PRO_0000409091" description="UDP-glycosyltransferase 76E6">
    <location>
        <begin position="1"/>
        <end position="449"/>
    </location>
</feature>
<feature type="binding site" evidence="1">
    <location>
        <position position="274"/>
    </location>
    <ligand>
        <name>UDP-alpha-D-glucose</name>
        <dbReference type="ChEBI" id="CHEBI:58885"/>
    </ligand>
</feature>
<feature type="binding site" evidence="1">
    <location>
        <begin position="333"/>
        <end position="335"/>
    </location>
    <ligand>
        <name>UDP-alpha-D-glucose</name>
        <dbReference type="ChEBI" id="CHEBI:58885"/>
    </ligand>
</feature>
<feature type="binding site" evidence="1">
    <location>
        <begin position="350"/>
        <end position="358"/>
    </location>
    <ligand>
        <name>UDP-alpha-D-glucose</name>
        <dbReference type="ChEBI" id="CHEBI:58885"/>
    </ligand>
</feature>
<feature type="binding site" evidence="1">
    <location>
        <begin position="372"/>
        <end position="375"/>
    </location>
    <ligand>
        <name>UDP-alpha-D-glucose</name>
        <dbReference type="ChEBI" id="CHEBI:58885"/>
    </ligand>
</feature>
<protein>
    <recommendedName>
        <fullName>UDP-glycosyltransferase 76E6</fullName>
        <ecNumber>2.4.1.-</ecNumber>
    </recommendedName>
</protein>
<name>U76E6_ARATH</name>
<dbReference type="EC" id="2.4.1.-"/>
<dbReference type="EMBL" id="AL096859">
    <property type="protein sequence ID" value="CAB51197.1"/>
    <property type="molecule type" value="Genomic_DNA"/>
</dbReference>
<dbReference type="EMBL" id="AL133314">
    <property type="protein sequence ID" value="CAB62338.1"/>
    <property type="molecule type" value="Genomic_DNA"/>
</dbReference>
<dbReference type="EMBL" id="CP002686">
    <property type="protein sequence ID" value="AEE78193.1"/>
    <property type="molecule type" value="Genomic_DNA"/>
</dbReference>
<dbReference type="EMBL" id="DQ446740">
    <property type="protein sequence ID" value="ABE65996.1"/>
    <property type="molecule type" value="mRNA"/>
</dbReference>
<dbReference type="PIR" id="T45605">
    <property type="entry name" value="T45605"/>
</dbReference>
<dbReference type="RefSeq" id="NP_190252.1">
    <property type="nucleotide sequence ID" value="NM_114535.1"/>
</dbReference>
<dbReference type="SMR" id="Q9SNB0"/>
<dbReference type="FunCoup" id="Q9SNB0">
    <property type="interactions" value="168"/>
</dbReference>
<dbReference type="CAZy" id="GT1">
    <property type="family name" value="Glycosyltransferase Family 1"/>
</dbReference>
<dbReference type="PaxDb" id="3702-AT3G46680.1"/>
<dbReference type="EnsemblPlants" id="AT3G46680.1">
    <property type="protein sequence ID" value="AT3G46680.1"/>
    <property type="gene ID" value="AT3G46680"/>
</dbReference>
<dbReference type="GeneID" id="823821"/>
<dbReference type="Gramene" id="AT3G46680.1">
    <property type="protein sequence ID" value="AT3G46680.1"/>
    <property type="gene ID" value="AT3G46680"/>
</dbReference>
<dbReference type="KEGG" id="ath:AT3G46680"/>
<dbReference type="Araport" id="AT3G46680"/>
<dbReference type="TAIR" id="AT3G46680"/>
<dbReference type="eggNOG" id="KOG1192">
    <property type="taxonomic scope" value="Eukaryota"/>
</dbReference>
<dbReference type="HOGENOM" id="CLU_001724_0_0_1"/>
<dbReference type="InParanoid" id="Q9SNB0"/>
<dbReference type="OMA" id="IAGSEWI"/>
<dbReference type="PhylomeDB" id="Q9SNB0"/>
<dbReference type="BioCyc" id="ARA:AT3G46680-MONOMER"/>
<dbReference type="PRO" id="PR:Q9SNB0"/>
<dbReference type="Proteomes" id="UP000006548">
    <property type="component" value="Chromosome 3"/>
</dbReference>
<dbReference type="ExpressionAtlas" id="Q9SNB0">
    <property type="expression patterns" value="baseline and differential"/>
</dbReference>
<dbReference type="GO" id="GO:0008194">
    <property type="term" value="F:UDP-glycosyltransferase activity"/>
    <property type="evidence" value="ECO:0007669"/>
    <property type="project" value="InterPro"/>
</dbReference>
<dbReference type="CDD" id="cd03784">
    <property type="entry name" value="GT1_Gtf-like"/>
    <property type="match status" value="1"/>
</dbReference>
<dbReference type="FunFam" id="3.40.50.2000:FF:000040">
    <property type="entry name" value="UDP-glycosyltransferase 76C1"/>
    <property type="match status" value="1"/>
</dbReference>
<dbReference type="FunFam" id="3.40.50.2000:FF:000151">
    <property type="entry name" value="UDP-glycosyltransferase 76E9"/>
    <property type="match status" value="1"/>
</dbReference>
<dbReference type="Gene3D" id="3.40.50.2000">
    <property type="entry name" value="Glycogen Phosphorylase B"/>
    <property type="match status" value="2"/>
</dbReference>
<dbReference type="InterPro" id="IPR002213">
    <property type="entry name" value="UDP_glucos_trans"/>
</dbReference>
<dbReference type="PANTHER" id="PTHR11926">
    <property type="entry name" value="GLUCOSYL/GLUCURONOSYL TRANSFERASES"/>
    <property type="match status" value="1"/>
</dbReference>
<dbReference type="PANTHER" id="PTHR11926:SF913">
    <property type="entry name" value="UDP-GLYCOSYLTRANSFERASE SUPERFAMILY PROTEIN-RELATED"/>
    <property type="match status" value="1"/>
</dbReference>
<dbReference type="Pfam" id="PF00201">
    <property type="entry name" value="UDPGT"/>
    <property type="match status" value="1"/>
</dbReference>
<dbReference type="SUPFAM" id="SSF53756">
    <property type="entry name" value="UDP-Glycosyltransferase/glycogen phosphorylase"/>
    <property type="match status" value="1"/>
</dbReference>